<accession>P35816</accession>
<sequence>MPAPTQLFFPLIRNCELSRIYGTACYCHHKHLCCSPPYIPQSRPRYTPHPAYATFYRPKESWWQYTQGRRYASTPQKFYLTPPQVNSILKANEYSFKVPEFDGKNVSSVLGFDSNQLPANAPIEDRRSAATCLQTRGMLLGVFDGHAGCACSQAVSERLFYYIAVSLLPHETLLEIENAVESGRALLPILQWHKHPNDYFSKEASKLYFNSLRTYWQELIDLNTGESTDIDVKEALINAFKRLDNDISLEAQVGDPNSFLNYLVLRVAFSGATACVAHVDGVDLHVANTGDSRAMLGVQEEDGSWSAVTLSNDHNAQNEREVERLKLEHPKNEAKSVVKQDRLLGLLMPFRAFGDVKFKWSIDLQKRVIESGPDQLNDNEYTKFIPPNYYTPPYLTAEPEVTYHRLRPQDKFLVLATDGLWETMHRQDVVRIVGEYLTGMHHQQPIAVGGYKVTLGQMHGLLTERRAKMSSVFEDQNAATHLIRHAVGNNEFGAVDHERLSKMLSLPEELARMYRDDITIIVVQFNSHVVGAYQNQEQ</sequence>
<reference key="1">
    <citation type="journal article" date="1993" name="Biochemistry">
        <title>Molecular cloning and expression of the catalytic subunit of bovine pyruvate dehydrogenase phosphatase and sequence similarity with protein phosphatase 2C.</title>
        <authorList>
            <person name="Lawson J.E."/>
            <person name="Niu X.-D."/>
            <person name="Browning K.S."/>
            <person name="Trong H.L."/>
            <person name="Yan J."/>
            <person name="Reed L.J."/>
        </authorList>
    </citation>
    <scope>NUCLEOTIDE SEQUENCE [MRNA]</scope>
    <scope>PARTIAL PROTEIN SEQUENCE</scope>
    <scope>FUNCTION</scope>
    <scope>CATALYTIC ACTIVITY</scope>
    <scope>ACTIVITY REGULATION</scope>
</reference>
<reference key="2">
    <citation type="journal article" date="1972" name="Arch. Biochem. Biophys.">
        <title>Keto acid dehydrogenase complexes. XVII. Kinetic and regulatory properties of pyruvate dehydrogenase kinase and pyruvate dehydrogenase phosphatase from bovine kidney and heart.</title>
        <authorList>
            <person name="Hucho F."/>
            <person name="Randall D.D."/>
            <person name="Roche T.E."/>
            <person name="Burgett M.W."/>
            <person name="Pelley J.W."/>
            <person name="Reed L.J."/>
        </authorList>
    </citation>
    <scope>FUNCTION</scope>
    <scope>CATALYTIC ACTIVITY</scope>
    <scope>BIOPHYSICOCHEMICAL PROPERTIES</scope>
    <scope>COFACTOR</scope>
    <scope>SUBCELLULAR LOCATION</scope>
</reference>
<reference key="3">
    <citation type="journal article" date="1982" name="Eur. J. Biochem.">
        <title>Purification of bovine kidney and heart pyruvate dehydrogenase phosphatase on Sepharose derivatized with the pyruvate dehydrogenase complex.</title>
        <authorList>
            <person name="Pratt M.L."/>
            <person name="Maher J.F."/>
            <person name="Roche T.E."/>
        </authorList>
    </citation>
    <scope>SUBUNIT</scope>
    <scope>SUBCELLULAR LOCATION</scope>
</reference>
<reference key="4">
    <citation type="journal article" date="1997" name="J. Biol. Chem.">
        <title>Cloning, expression, and properties of the regulatory subunit of bovine pyruvate dehydrogenase phosphatase.</title>
        <authorList>
            <person name="Lawson J.E."/>
            <person name="Park S.H."/>
            <person name="Mattison A.R."/>
            <person name="Yan J."/>
            <person name="Reed L.J."/>
        </authorList>
    </citation>
    <scope>SUBUNIT</scope>
    <scope>ACTIVITY REGULATION</scope>
</reference>
<reference key="5">
    <citation type="journal article" date="2004" name="Biochemistry">
        <title>Formation of a complex of the catalytic subunit of pyruvate dehydrogenase phosphatase isoform 1 (PDP1c) and the L2 domain forms a Ca2+ binding site and captures PDP1c as a monomer.</title>
        <authorList>
            <person name="Turkan A."/>
            <person name="Hiromasa Y."/>
            <person name="Roche T.E."/>
        </authorList>
    </citation>
    <scope>FUNCTION</scope>
    <scope>CATALYTIC ACTIVITY</scope>
</reference>
<reference evidence="16" key="6">
    <citation type="submission" date="2010-04" db="PDB data bank">
        <title>Crystal Structure of Catalytic Subunit of Bovine Pyruvate Dehydrogenase Phophatase.</title>
        <authorList>
            <person name="Guo Y."/>
            <person name="Ernst S.R."/>
            <person name="Carroll D.W."/>
            <person name="Hackert M.L."/>
        </authorList>
    </citation>
    <scope>X-RAY CRYSTALLOGRAPHY (2.80 ANGSTROMS) OF 72-538 IN COMPLEX WITH MN(2+)</scope>
</reference>
<reference evidence="17" key="7">
    <citation type="journal article" date="2020" name="Acta Crystallogr. F Struct. Biol. Commun.">
        <title>Crystal structure of the catalytic subunit of bovine pyruvate dehydrogenase phosphatase.</title>
        <authorList>
            <person name="Guo Y."/>
            <person name="Qiu W."/>
            <person name="Roche T.E."/>
            <person name="Hackert M.L."/>
        </authorList>
    </citation>
    <scope>X-RAY CRYSTALLOGRAPHY (2.10 ANGSTROMS) OF 72-538 IN COMPLEX WITH MN(2+)</scope>
</reference>
<protein>
    <recommendedName>
        <fullName>[Pyruvate dehydrogenase [acetyl-transferring]]-phosphatase 1, mitochondrial</fullName>
        <shortName>PDP 1</shortName>
        <ecNumber evidence="4 8 14">3.1.3.43</ecNumber>
    </recommendedName>
    <alternativeName>
        <fullName>Protein phosphatase 2C</fullName>
        <shortName evidence="11 12">PDPc</shortName>
    </alternativeName>
    <alternativeName>
        <fullName>Pyruvate dehydrogenase phosphatase catalytic subunit 1</fullName>
        <shortName>PDPC 1</shortName>
    </alternativeName>
</protein>
<evidence type="ECO:0000250" key="1">
    <source>
        <dbReference type="UniProtKB" id="O88483"/>
    </source>
</evidence>
<evidence type="ECO:0000250" key="2">
    <source>
        <dbReference type="UniProtKB" id="Q9P0J1"/>
    </source>
</evidence>
<evidence type="ECO:0000255" key="3">
    <source>
        <dbReference type="PROSITE-ProRule" id="PRU01082"/>
    </source>
</evidence>
<evidence type="ECO:0000269" key="4">
    <source>
    </source>
</evidence>
<evidence type="ECO:0000269" key="5">
    <source>
    </source>
</evidence>
<evidence type="ECO:0000269" key="6">
    <source>
    </source>
</evidence>
<evidence type="ECO:0000269" key="7">
    <source>
    </source>
</evidence>
<evidence type="ECO:0000269" key="8">
    <source>
    </source>
</evidence>
<evidence type="ECO:0000269" key="9">
    <source>
    </source>
</evidence>
<evidence type="ECO:0000269" key="10">
    <source ref="6"/>
</evidence>
<evidence type="ECO:0000303" key="11">
    <source>
    </source>
</evidence>
<evidence type="ECO:0000303" key="12">
    <source>
    </source>
</evidence>
<evidence type="ECO:0000305" key="13"/>
<evidence type="ECO:0000305" key="14">
    <source>
    </source>
</evidence>
<evidence type="ECO:0000305" key="15">
    <source>
    </source>
</evidence>
<evidence type="ECO:0007744" key="16">
    <source>
        <dbReference type="PDB" id="3MQ3"/>
    </source>
</evidence>
<evidence type="ECO:0007744" key="17">
    <source>
        <dbReference type="PDB" id="6V0T"/>
    </source>
</evidence>
<evidence type="ECO:0007829" key="18">
    <source>
        <dbReference type="PDB" id="3MQ3"/>
    </source>
</evidence>
<evidence type="ECO:0007829" key="19">
    <source>
        <dbReference type="PDB" id="6V0T"/>
    </source>
</evidence>
<dbReference type="EC" id="3.1.3.43" evidence="4 8 14"/>
<dbReference type="EMBL" id="L18966">
    <property type="protein sequence ID" value="AAA30697.1"/>
    <property type="status" value="ALT_INIT"/>
    <property type="molecule type" value="mRNA"/>
</dbReference>
<dbReference type="PIR" id="A48692">
    <property type="entry name" value="A48692"/>
</dbReference>
<dbReference type="RefSeq" id="NP_001193282.1">
    <property type="nucleotide sequence ID" value="NM_001206353.1"/>
</dbReference>
<dbReference type="RefSeq" id="XP_005215704.1">
    <property type="nucleotide sequence ID" value="XM_005215647.5"/>
</dbReference>
<dbReference type="RefSeq" id="XP_005215707.1">
    <property type="nucleotide sequence ID" value="XM_005215650.5"/>
</dbReference>
<dbReference type="RefSeq" id="XP_010810497.1">
    <property type="nucleotide sequence ID" value="XM_010812195.4"/>
</dbReference>
<dbReference type="RefSeq" id="XP_024857172.1">
    <property type="nucleotide sequence ID" value="XM_025001404.2"/>
</dbReference>
<dbReference type="RefSeq" id="XP_024857173.1">
    <property type="nucleotide sequence ID" value="XM_025001405.2"/>
</dbReference>
<dbReference type="RefSeq" id="XP_059749101.1">
    <property type="nucleotide sequence ID" value="XM_059893118.1"/>
</dbReference>
<dbReference type="RefSeq" id="XP_059749102.1">
    <property type="nucleotide sequence ID" value="XM_059893119.1"/>
</dbReference>
<dbReference type="PDB" id="3MQ3">
    <property type="method" value="X-ray"/>
    <property type="resolution" value="2.80 A"/>
    <property type="chains" value="A=72-538"/>
</dbReference>
<dbReference type="PDB" id="6V0T">
    <property type="method" value="X-ray"/>
    <property type="resolution" value="2.10 A"/>
    <property type="chains" value="A=72-538"/>
</dbReference>
<dbReference type="PDBsum" id="3MQ3"/>
<dbReference type="PDBsum" id="6V0T"/>
<dbReference type="SMR" id="P35816"/>
<dbReference type="FunCoup" id="P35816">
    <property type="interactions" value="2692"/>
</dbReference>
<dbReference type="STRING" id="9913.ENSBTAP00000043214"/>
<dbReference type="PaxDb" id="9913-ENSBTAP00000043214"/>
<dbReference type="PeptideAtlas" id="P35816"/>
<dbReference type="Ensembl" id="ENSBTAT00000000233.5">
    <property type="protein sequence ID" value="ENSBTAP00000000233.3"/>
    <property type="gene ID" value="ENSBTAG00000000199.6"/>
</dbReference>
<dbReference type="Ensembl" id="ENSBTAT00000101289.1">
    <property type="protein sequence ID" value="ENSBTAP00000086389.1"/>
    <property type="gene ID" value="ENSBTAG00000000199.6"/>
</dbReference>
<dbReference type="Ensembl" id="ENSBTAT00000117008.1">
    <property type="protein sequence ID" value="ENSBTAP00000075096.1"/>
    <property type="gene ID" value="ENSBTAG00000000199.6"/>
</dbReference>
<dbReference type="Ensembl" id="ENSBTAT00000133941.1">
    <property type="protein sequence ID" value="ENSBTAP00000076261.1"/>
    <property type="gene ID" value="ENSBTAG00000000199.6"/>
</dbReference>
<dbReference type="GeneID" id="280891"/>
<dbReference type="KEGG" id="bta:280891"/>
<dbReference type="CTD" id="54704"/>
<dbReference type="VEuPathDB" id="HostDB:ENSBTAG00000000199"/>
<dbReference type="VGNC" id="VGNC:32713">
    <property type="gene designation" value="PDP1"/>
</dbReference>
<dbReference type="eggNOG" id="KOG0700">
    <property type="taxonomic scope" value="Eukaryota"/>
</dbReference>
<dbReference type="GeneTree" id="ENSGT00940000156368"/>
<dbReference type="HOGENOM" id="CLU_021928_0_0_1"/>
<dbReference type="InParanoid" id="P35816"/>
<dbReference type="OrthoDB" id="420076at2759"/>
<dbReference type="BRENDA" id="3.1.3.43">
    <property type="organism ID" value="908"/>
</dbReference>
<dbReference type="Reactome" id="R-BTA-204174">
    <property type="pathway name" value="Regulation of pyruvate dehydrogenase (PDH) complex"/>
</dbReference>
<dbReference type="EvolutionaryTrace" id="P35816"/>
<dbReference type="Proteomes" id="UP000009136">
    <property type="component" value="Chromosome 14"/>
</dbReference>
<dbReference type="Bgee" id="ENSBTAG00000000199">
    <property type="expression patterns" value="Expressed in occipital lobe and 103 other cell types or tissues"/>
</dbReference>
<dbReference type="GO" id="GO:0019910">
    <property type="term" value="C:mitochondrial pyruvate dehydrogenase (lipoamide) phosphatase complex"/>
    <property type="evidence" value="ECO:0000314"/>
    <property type="project" value="FlyBase"/>
</dbReference>
<dbReference type="GO" id="GO:0005739">
    <property type="term" value="C:mitochondrion"/>
    <property type="evidence" value="ECO:0000314"/>
    <property type="project" value="UniProtKB"/>
</dbReference>
<dbReference type="GO" id="GO:0045254">
    <property type="term" value="C:pyruvate dehydrogenase complex"/>
    <property type="evidence" value="ECO:0000314"/>
    <property type="project" value="FlyBase"/>
</dbReference>
<dbReference type="GO" id="GO:0004741">
    <property type="term" value="F:[pyruvate dehydrogenase (acetyl-transferring)]-phosphatase activity"/>
    <property type="evidence" value="ECO:0000314"/>
    <property type="project" value="UniProtKB"/>
</dbReference>
<dbReference type="GO" id="GO:0005509">
    <property type="term" value="F:calcium ion binding"/>
    <property type="evidence" value="ECO:0000314"/>
    <property type="project" value="UniProtKB"/>
</dbReference>
<dbReference type="GO" id="GO:0000287">
    <property type="term" value="F:magnesium ion binding"/>
    <property type="evidence" value="ECO:0000314"/>
    <property type="project" value="UniProtKB"/>
</dbReference>
<dbReference type="GO" id="GO:0016311">
    <property type="term" value="P:dephosphorylation"/>
    <property type="evidence" value="ECO:0000304"/>
    <property type="project" value="UniProtKB"/>
</dbReference>
<dbReference type="GO" id="GO:0007165">
    <property type="term" value="P:signal transduction"/>
    <property type="evidence" value="ECO:0000318"/>
    <property type="project" value="GO_Central"/>
</dbReference>
<dbReference type="CDD" id="cd00143">
    <property type="entry name" value="PP2Cc"/>
    <property type="match status" value="1"/>
</dbReference>
<dbReference type="Gene3D" id="3.60.40.10">
    <property type="entry name" value="PPM-type phosphatase domain"/>
    <property type="match status" value="1"/>
</dbReference>
<dbReference type="InterPro" id="IPR015655">
    <property type="entry name" value="PP2C"/>
</dbReference>
<dbReference type="InterPro" id="IPR000222">
    <property type="entry name" value="PP2C_BS"/>
</dbReference>
<dbReference type="InterPro" id="IPR036457">
    <property type="entry name" value="PPM-type-like_dom_sf"/>
</dbReference>
<dbReference type="InterPro" id="IPR001932">
    <property type="entry name" value="PPM-type_phosphatase-like_dom"/>
</dbReference>
<dbReference type="PANTHER" id="PTHR13832:SF627">
    <property type="entry name" value="[PYRUVATE DEHYDROGENASE [ACETYL-TRANSFERRING]]-PHOSPHATASE 1, MITOCHONDRIAL"/>
    <property type="match status" value="1"/>
</dbReference>
<dbReference type="PANTHER" id="PTHR13832">
    <property type="entry name" value="PROTEIN PHOSPHATASE 2C"/>
    <property type="match status" value="1"/>
</dbReference>
<dbReference type="Pfam" id="PF00481">
    <property type="entry name" value="PP2C"/>
    <property type="match status" value="1"/>
</dbReference>
<dbReference type="SMART" id="SM00332">
    <property type="entry name" value="PP2Cc"/>
    <property type="match status" value="1"/>
</dbReference>
<dbReference type="SUPFAM" id="SSF81606">
    <property type="entry name" value="PP2C-like"/>
    <property type="match status" value="1"/>
</dbReference>
<dbReference type="PROSITE" id="PS01032">
    <property type="entry name" value="PPM_1"/>
    <property type="match status" value="1"/>
</dbReference>
<dbReference type="PROSITE" id="PS51746">
    <property type="entry name" value="PPM_2"/>
    <property type="match status" value="1"/>
</dbReference>
<feature type="transit peptide" description="Mitochondrion" evidence="10">
    <location>
        <begin position="1"/>
        <end position="71"/>
    </location>
</feature>
<feature type="chain" id="PRO_0000025418" description="[Pyruvate dehydrogenase [acetyl-transferring]]-phosphatase 1, mitochondrial">
    <location>
        <begin position="72"/>
        <end position="538"/>
    </location>
</feature>
<feature type="domain" description="PPM-type phosphatase" evidence="3">
    <location>
        <begin position="109"/>
        <end position="525"/>
    </location>
</feature>
<feature type="binding site" evidence="5 10 16 17">
    <location>
        <position position="144"/>
    </location>
    <ligand>
        <name>Mn(2+)</name>
        <dbReference type="ChEBI" id="CHEBI:29035"/>
        <label>1</label>
    </ligand>
</feature>
<feature type="binding site" evidence="5 10 16 17">
    <location>
        <position position="144"/>
    </location>
    <ligand>
        <name>Mn(2+)</name>
        <dbReference type="ChEBI" id="CHEBI:29035"/>
        <label>2</label>
    </ligand>
</feature>
<feature type="binding site" evidence="5 10 16 17">
    <location>
        <position position="145"/>
    </location>
    <ligand>
        <name>Mn(2+)</name>
        <dbReference type="ChEBI" id="CHEBI:29035"/>
        <label>1</label>
    </ligand>
</feature>
<feature type="binding site" evidence="5 10 16 17">
    <location>
        <position position="418"/>
    </location>
    <ligand>
        <name>Mn(2+)</name>
        <dbReference type="ChEBI" id="CHEBI:29035"/>
        <label>2</label>
    </ligand>
</feature>
<feature type="binding site" evidence="5 10 16 17">
    <location>
        <position position="516"/>
    </location>
    <ligand>
        <name>Mn(2+)</name>
        <dbReference type="ChEBI" id="CHEBI:29035"/>
        <label>2</label>
    </ligand>
</feature>
<feature type="modified residue" description="N6-acetyllysine" evidence="2">
    <location>
        <position position="202"/>
    </location>
</feature>
<feature type="helix" evidence="19">
    <location>
        <begin position="82"/>
        <end position="89"/>
    </location>
</feature>
<feature type="turn" evidence="18">
    <location>
        <begin position="90"/>
        <end position="92"/>
    </location>
</feature>
<feature type="strand" evidence="19">
    <location>
        <begin position="94"/>
        <end position="97"/>
    </location>
</feature>
<feature type="strand" evidence="19">
    <location>
        <begin position="107"/>
        <end position="117"/>
    </location>
</feature>
<feature type="strand" evidence="19">
    <location>
        <begin position="119"/>
        <end position="122"/>
    </location>
</feature>
<feature type="strand" evidence="19">
    <location>
        <begin position="125"/>
        <end position="135"/>
    </location>
</feature>
<feature type="strand" evidence="19">
    <location>
        <begin position="138"/>
        <end position="149"/>
    </location>
</feature>
<feature type="helix" evidence="19">
    <location>
        <begin position="150"/>
        <end position="166"/>
    </location>
</feature>
<feature type="helix" evidence="19">
    <location>
        <begin position="170"/>
        <end position="182"/>
    </location>
</feature>
<feature type="strand" evidence="19">
    <location>
        <begin position="190"/>
        <end position="192"/>
    </location>
</feature>
<feature type="helix" evidence="19">
    <location>
        <begin position="205"/>
        <end position="222"/>
    </location>
</feature>
<feature type="helix" evidence="19">
    <location>
        <begin position="232"/>
        <end position="253"/>
    </location>
</feature>
<feature type="helix" evidence="19">
    <location>
        <begin position="258"/>
        <end position="269"/>
    </location>
</feature>
<feature type="strand" evidence="19">
    <location>
        <begin position="270"/>
        <end position="272"/>
    </location>
</feature>
<feature type="strand" evidence="19">
    <location>
        <begin position="274"/>
        <end position="280"/>
    </location>
</feature>
<feature type="strand" evidence="19">
    <location>
        <begin position="283"/>
        <end position="291"/>
    </location>
</feature>
<feature type="strand" evidence="19">
    <location>
        <begin position="293"/>
        <end position="299"/>
    </location>
</feature>
<feature type="strand" evidence="19">
    <location>
        <begin position="305"/>
        <end position="309"/>
    </location>
</feature>
<feature type="helix" evidence="19">
    <location>
        <begin position="319"/>
        <end position="327"/>
    </location>
</feature>
<feature type="helix" evidence="19">
    <location>
        <begin position="331"/>
        <end position="333"/>
    </location>
</feature>
<feature type="turn" evidence="19">
    <location>
        <begin position="334"/>
        <end position="336"/>
    </location>
</feature>
<feature type="strand" evidence="19">
    <location>
        <begin position="337"/>
        <end position="339"/>
    </location>
</feature>
<feature type="turn" evidence="19">
    <location>
        <begin position="344"/>
        <end position="346"/>
    </location>
</feature>
<feature type="strand" evidence="19">
    <location>
        <begin position="347"/>
        <end position="351"/>
    </location>
</feature>
<feature type="helix" evidence="19">
    <location>
        <begin position="356"/>
        <end position="358"/>
    </location>
</feature>
<feature type="helix" evidence="19">
    <location>
        <begin position="362"/>
        <end position="369"/>
    </location>
</feature>
<feature type="strand" evidence="19">
    <location>
        <begin position="400"/>
        <end position="405"/>
    </location>
</feature>
<feature type="strand" evidence="19">
    <location>
        <begin position="410"/>
        <end position="416"/>
    </location>
</feature>
<feature type="helix" evidence="19">
    <location>
        <begin position="418"/>
        <end position="421"/>
    </location>
</feature>
<feature type="helix" evidence="19">
    <location>
        <begin position="426"/>
        <end position="437"/>
    </location>
</feature>
<feature type="helix" evidence="19">
    <location>
        <begin position="478"/>
        <end position="487"/>
    </location>
</feature>
<feature type="strand" evidence="19">
    <location>
        <begin position="490"/>
        <end position="492"/>
    </location>
</feature>
<feature type="helix" evidence="19">
    <location>
        <begin position="499"/>
        <end position="504"/>
    </location>
</feature>
<feature type="helix" evidence="19">
    <location>
        <begin position="508"/>
        <end position="514"/>
    </location>
</feature>
<feature type="strand" evidence="19">
    <location>
        <begin position="518"/>
        <end position="525"/>
    </location>
</feature>
<feature type="helix" evidence="19">
    <location>
        <begin position="527"/>
        <end position="533"/>
    </location>
</feature>
<organism>
    <name type="scientific">Bos taurus</name>
    <name type="common">Bovine</name>
    <dbReference type="NCBI Taxonomy" id="9913"/>
    <lineage>
        <taxon>Eukaryota</taxon>
        <taxon>Metazoa</taxon>
        <taxon>Chordata</taxon>
        <taxon>Craniata</taxon>
        <taxon>Vertebrata</taxon>
        <taxon>Euteleostomi</taxon>
        <taxon>Mammalia</taxon>
        <taxon>Eutheria</taxon>
        <taxon>Laurasiatheria</taxon>
        <taxon>Artiodactyla</taxon>
        <taxon>Ruminantia</taxon>
        <taxon>Pecora</taxon>
        <taxon>Bovidae</taxon>
        <taxon>Bovinae</taxon>
        <taxon>Bos</taxon>
    </lineage>
</organism>
<keyword id="KW-0002">3D-structure</keyword>
<keyword id="KW-0007">Acetylation</keyword>
<keyword id="KW-0106">Calcium</keyword>
<keyword id="KW-0903">Direct protein sequencing</keyword>
<keyword id="KW-0378">Hydrolase</keyword>
<keyword id="KW-0460">Magnesium</keyword>
<keyword id="KW-0479">Metal-binding</keyword>
<keyword id="KW-0496">Mitochondrion</keyword>
<keyword id="KW-0904">Protein phosphatase</keyword>
<keyword id="KW-1185">Reference proteome</keyword>
<keyword id="KW-0809">Transit peptide</keyword>
<name>PDP1_BOVIN</name>
<gene>
    <name type="primary">PDP1</name>
    <name type="synonym">PDP</name>
    <name type="synonym">PPM2C</name>
</gene>
<proteinExistence type="evidence at protein level"/>
<comment type="function">
    <text evidence="4 6 9">Mitochondrial enzyme that catalyzes the dephosphorylation and concomitant reactivation of the alpha subunit of the E1 component of the pyruvate dehydrogenase complex (PDC), thereby stimulating the conversion of pyruvate into acetyl-CoA.</text>
</comment>
<comment type="catalytic activity">
    <reaction evidence="4 8 14">
        <text>O-phospho-L-seryl-[pyruvate dehydrogenase E1 alpha subunit] + H2O = L-seryl-[pyruvate dehydrogenase E1 alpha subunit] + phosphate</text>
        <dbReference type="Rhea" id="RHEA:12669"/>
        <dbReference type="Rhea" id="RHEA-COMP:13689"/>
        <dbReference type="Rhea" id="RHEA-COMP:13690"/>
        <dbReference type="ChEBI" id="CHEBI:15377"/>
        <dbReference type="ChEBI" id="CHEBI:29999"/>
        <dbReference type="ChEBI" id="CHEBI:43474"/>
        <dbReference type="ChEBI" id="CHEBI:83421"/>
        <dbReference type="EC" id="3.1.3.43"/>
    </reaction>
    <physiologicalReaction direction="left-to-right" evidence="13">
        <dbReference type="Rhea" id="RHEA:12670"/>
    </physiologicalReaction>
</comment>
<comment type="cofactor">
    <cofactor evidence="5 10">
        <name>Mn(2+)</name>
        <dbReference type="ChEBI" id="CHEBI:29035"/>
    </cofactor>
    <cofactor evidence="1">
        <name>Mg(2+)</name>
        <dbReference type="ChEBI" id="CHEBI:18420"/>
    </cofactor>
    <text evidence="1 5 6 10">Binds 2 Mn(2+) ions per subunit (PubMed:32627744, Ref.6). Binds 2 Mg(2+) ions per subunit (By similarity). Mn(2+) can substitute Mg2(+) for catalytic activity (PubMed:4339797).</text>
</comment>
<comment type="activity regulation">
    <text evidence="4 8">Magnesium-dependent and calcium-stimulated (PubMed:8396421). PDP1 activity strongly depends on its Ca(2+)-dependent binding to the lipoyl domain of E2 subunit of component of the pyruvate dehydrogenase complex (PubMed:15554715).</text>
</comment>
<comment type="subunit">
    <text evidence="9 15">Heterodimer of a catalytic (PDP1) and a regulatory (PDPR) subunit.</text>
</comment>
<comment type="subcellular location">
    <subcellularLocation>
        <location evidence="6 7">Mitochondrion</location>
    </subcellularLocation>
</comment>
<comment type="similarity">
    <text evidence="13">Belongs to the PP2C family.</text>
</comment>
<comment type="sequence caution" evidence="13">
    <conflict type="erroneous initiation">
        <sequence resource="EMBL-CDS" id="AAA30697"/>
    </conflict>
</comment>